<gene>
    <name type="primary">yehA</name>
    <name type="ordered locus">b2108</name>
    <name type="ordered locus">JW2095</name>
</gene>
<accession>P33340</accession>
<protein>
    <recommendedName>
        <fullName>Uncharacterized fimbrial-like protein YehA</fullName>
    </recommendedName>
</protein>
<name>YEHA_ECOLI</name>
<sequence>MEIRIMLFILMMMVMPVSYAACYSELSVQHNLVVQGDFALTQTQMATYEHNFNDSSCVSTNTITPMSPSDIIVGLYNDTIKLNLHFEWTNKNNITLSNNQTSFTSGYSVTVTPAASNAKVNVSAGGGGSVMINGVATLSSASSSTRGSAAVQFLLCLLGGKSWDACVNSYRNALAQNAGVYSFNLTLSYNPITTTCKPDDLLITLDSIPVSQLPATGNKATINSKQGDIILRCKNLLGQQNQTSRKMQVYLSSSDLLTNSNTILKGAEDNGVGFILESNGSPVTLLNITNSSKGYTNLKEVAAKSKLTDTTVSIPITASYYVYDTNKVKSGALEATALINVKYD</sequence>
<feature type="signal peptide" evidence="1">
    <location>
        <begin position="1"/>
        <end position="20"/>
    </location>
</feature>
<feature type="chain" id="PRO_0000013867" description="Uncharacterized fimbrial-like protein YehA">
    <location>
        <begin position="21"/>
        <end position="344"/>
    </location>
</feature>
<organism>
    <name type="scientific">Escherichia coli (strain K12)</name>
    <dbReference type="NCBI Taxonomy" id="83333"/>
    <lineage>
        <taxon>Bacteria</taxon>
        <taxon>Pseudomonadati</taxon>
        <taxon>Pseudomonadota</taxon>
        <taxon>Gammaproteobacteria</taxon>
        <taxon>Enterobacterales</taxon>
        <taxon>Enterobacteriaceae</taxon>
        <taxon>Escherichia</taxon>
    </lineage>
</organism>
<dbReference type="EMBL" id="U00007">
    <property type="protein sequence ID" value="AAA60472.1"/>
    <property type="molecule type" value="Genomic_DNA"/>
</dbReference>
<dbReference type="EMBL" id="U00096">
    <property type="protein sequence ID" value="AAC75169.1"/>
    <property type="molecule type" value="Genomic_DNA"/>
</dbReference>
<dbReference type="EMBL" id="AP009048">
    <property type="protein sequence ID" value="BAA15974.1"/>
    <property type="molecule type" value="Genomic_DNA"/>
</dbReference>
<dbReference type="PIR" id="C64978">
    <property type="entry name" value="C64978"/>
</dbReference>
<dbReference type="RefSeq" id="NP_416611.1">
    <property type="nucleotide sequence ID" value="NC_000913.3"/>
</dbReference>
<dbReference type="RefSeq" id="WP_000405713.1">
    <property type="nucleotide sequence ID" value="NZ_SSZK01000011.1"/>
</dbReference>
<dbReference type="SMR" id="P33340"/>
<dbReference type="BioGRID" id="4260434">
    <property type="interactions" value="10"/>
</dbReference>
<dbReference type="FunCoup" id="P33340">
    <property type="interactions" value="3"/>
</dbReference>
<dbReference type="IntAct" id="P33340">
    <property type="interactions" value="1"/>
</dbReference>
<dbReference type="STRING" id="511145.b2108"/>
<dbReference type="PaxDb" id="511145-b2108"/>
<dbReference type="EnsemblBacteria" id="AAC75169">
    <property type="protein sequence ID" value="AAC75169"/>
    <property type="gene ID" value="b2108"/>
</dbReference>
<dbReference type="GeneID" id="946642"/>
<dbReference type="KEGG" id="ecj:JW2095"/>
<dbReference type="KEGG" id="eco:b2108"/>
<dbReference type="PATRIC" id="fig|1411691.4.peg.139"/>
<dbReference type="EchoBASE" id="EB1930"/>
<dbReference type="eggNOG" id="COG3539">
    <property type="taxonomic scope" value="Bacteria"/>
</dbReference>
<dbReference type="HOGENOM" id="CLU_069559_0_0_6"/>
<dbReference type="InParanoid" id="P33340"/>
<dbReference type="OMA" id="KIRIMLF"/>
<dbReference type="PhylomeDB" id="P33340"/>
<dbReference type="BioCyc" id="EcoCyc:EG11987-MONOMER"/>
<dbReference type="PRO" id="PR:P33340"/>
<dbReference type="Proteomes" id="UP000000625">
    <property type="component" value="Chromosome"/>
</dbReference>
<dbReference type="GO" id="GO:0009289">
    <property type="term" value="C:pilus"/>
    <property type="evidence" value="ECO:0007669"/>
    <property type="project" value="InterPro"/>
</dbReference>
<dbReference type="GO" id="GO:0043709">
    <property type="term" value="P:cell adhesion involved in single-species biofilm formation"/>
    <property type="evidence" value="ECO:0000315"/>
    <property type="project" value="EcoCyc"/>
</dbReference>
<dbReference type="FunFam" id="2.60.40.1090:FF:000039">
    <property type="entry name" value="Fimbrial-like adhesin protein"/>
    <property type="match status" value="1"/>
</dbReference>
<dbReference type="Gene3D" id="2.60.40.1090">
    <property type="entry name" value="Fimbrial-type adhesion domain"/>
    <property type="match status" value="1"/>
</dbReference>
<dbReference type="InterPro" id="IPR000259">
    <property type="entry name" value="Adhesion_dom_fimbrial"/>
</dbReference>
<dbReference type="InterPro" id="IPR036937">
    <property type="entry name" value="Adhesion_dom_fimbrial_sf"/>
</dbReference>
<dbReference type="InterPro" id="IPR008966">
    <property type="entry name" value="Adhesion_dom_sf"/>
</dbReference>
<dbReference type="InterPro" id="IPR016959">
    <property type="entry name" value="UCP030811"/>
</dbReference>
<dbReference type="NCBIfam" id="NF011788">
    <property type="entry name" value="PRK15252.1"/>
    <property type="match status" value="1"/>
</dbReference>
<dbReference type="Pfam" id="PF00419">
    <property type="entry name" value="Fimbrial"/>
    <property type="match status" value="1"/>
</dbReference>
<dbReference type="PIRSF" id="PIRSF030811">
    <property type="entry name" value="UCP030811"/>
    <property type="match status" value="1"/>
</dbReference>
<dbReference type="SUPFAM" id="SSF49401">
    <property type="entry name" value="Bacterial adhesins"/>
    <property type="match status" value="1"/>
</dbReference>
<evidence type="ECO:0000255" key="1"/>
<evidence type="ECO:0000269" key="2">
    <source>
    </source>
</evidence>
<evidence type="ECO:0000305" key="3"/>
<evidence type="ECO:0000305" key="4">
    <source>
    </source>
</evidence>
<comment type="function">
    <text evidence="2">Part of the yehABCD fimbrial operon. Could contribute to adhesion to various surfaces in specific environmental niches.</text>
</comment>
<comment type="induction">
    <text evidence="2">Expression is negatively regulated by H-NS and subjected to cAMP receptor protein (CRP)-mediated catabolite repression.</text>
</comment>
<comment type="disruption phenotype">
    <text evidence="2">Deletion of the operon under classical laboratory conditions does not result in any major effect on E.coli capacity to form biofilms compared with the wild-type strain.</text>
</comment>
<comment type="miscellaneous">
    <text evidence="4">The operon is cryptic under classical laboratory conditions, but is functional when constitutively expressed.</text>
</comment>
<comment type="similarity">
    <text evidence="3">Belongs to the fimbrial protein family.</text>
</comment>
<proteinExistence type="evidence at transcript level"/>
<reference key="1">
    <citation type="submission" date="1993-10" db="EMBL/GenBank/DDBJ databases">
        <title>Automated multiplex sequencing of the E.coli genome.</title>
        <authorList>
            <person name="Richterich P."/>
            <person name="Lakey N."/>
            <person name="Gryan G."/>
            <person name="Jaehn L."/>
            <person name="Mintz L."/>
            <person name="Robison K."/>
            <person name="Church G.M."/>
        </authorList>
    </citation>
    <scope>NUCLEOTIDE SEQUENCE [LARGE SCALE GENOMIC DNA]</scope>
    <source>
        <strain>K12 / BHB2600</strain>
    </source>
</reference>
<reference key="2">
    <citation type="journal article" date="1996" name="DNA Res.">
        <title>A 460-kb DNA sequence of the Escherichia coli K-12 genome corresponding to the 40.1-50.0 min region on the linkage map.</title>
        <authorList>
            <person name="Itoh T."/>
            <person name="Aiba H."/>
            <person name="Baba T."/>
            <person name="Fujita K."/>
            <person name="Hayashi K."/>
            <person name="Inada T."/>
            <person name="Isono K."/>
            <person name="Kasai H."/>
            <person name="Kimura S."/>
            <person name="Kitakawa M."/>
            <person name="Kitagawa M."/>
            <person name="Makino K."/>
            <person name="Miki T."/>
            <person name="Mizobuchi K."/>
            <person name="Mori H."/>
            <person name="Mori T."/>
            <person name="Motomura K."/>
            <person name="Nakade S."/>
            <person name="Nakamura Y."/>
            <person name="Nashimoto H."/>
            <person name="Nishio Y."/>
            <person name="Oshima T."/>
            <person name="Saito N."/>
            <person name="Sampei G."/>
            <person name="Seki Y."/>
            <person name="Sivasundaram S."/>
            <person name="Tagami H."/>
            <person name="Takeda J."/>
            <person name="Takemoto K."/>
            <person name="Wada C."/>
            <person name="Yamamoto Y."/>
            <person name="Horiuchi T."/>
        </authorList>
    </citation>
    <scope>NUCLEOTIDE SEQUENCE [LARGE SCALE GENOMIC DNA]</scope>
    <source>
        <strain>K12 / W3110 / ATCC 27325 / DSM 5911</strain>
    </source>
</reference>
<reference key="3">
    <citation type="journal article" date="1997" name="Science">
        <title>The complete genome sequence of Escherichia coli K-12.</title>
        <authorList>
            <person name="Blattner F.R."/>
            <person name="Plunkett G. III"/>
            <person name="Bloch C.A."/>
            <person name="Perna N.T."/>
            <person name="Burland V."/>
            <person name="Riley M."/>
            <person name="Collado-Vides J."/>
            <person name="Glasner J.D."/>
            <person name="Rode C.K."/>
            <person name="Mayhew G.F."/>
            <person name="Gregor J."/>
            <person name="Davis N.W."/>
            <person name="Kirkpatrick H.A."/>
            <person name="Goeden M.A."/>
            <person name="Rose D.J."/>
            <person name="Mau B."/>
            <person name="Shao Y."/>
        </authorList>
    </citation>
    <scope>NUCLEOTIDE SEQUENCE [LARGE SCALE GENOMIC DNA]</scope>
    <source>
        <strain>K12 / MG1655 / ATCC 47076</strain>
    </source>
</reference>
<reference key="4">
    <citation type="journal article" date="2006" name="Mol. Syst. Biol.">
        <title>Highly accurate genome sequences of Escherichia coli K-12 strains MG1655 and W3110.</title>
        <authorList>
            <person name="Hayashi K."/>
            <person name="Morooka N."/>
            <person name="Yamamoto Y."/>
            <person name="Fujita K."/>
            <person name="Isono K."/>
            <person name="Choi S."/>
            <person name="Ohtsubo E."/>
            <person name="Baba T."/>
            <person name="Wanner B.L."/>
            <person name="Mori H."/>
            <person name="Horiuchi T."/>
        </authorList>
    </citation>
    <scope>NUCLEOTIDE SEQUENCE [LARGE SCALE GENOMIC DNA]</scope>
    <source>
        <strain>K12 / W3110 / ATCC 27325 / DSM 5911</strain>
    </source>
</reference>
<reference key="5">
    <citation type="journal article" date="2010" name="Environ. Microbiol.">
        <title>Escherichia coli K-12 possesses multiple cryptic but functional chaperone-usher fimbriae with distinct surface specificities.</title>
        <authorList>
            <person name="Korea C.G."/>
            <person name="Badouraly R."/>
            <person name="Prevost M.C."/>
            <person name="Ghigo J.M."/>
            <person name="Beloin C."/>
        </authorList>
    </citation>
    <scope>FUNCTION</scope>
    <scope>INDUCTION</scope>
    <scope>DISRUPTION PHENOTYPE</scope>
    <source>
        <strain>K12 / MG1655 / ATCC 47076</strain>
    </source>
</reference>
<keyword id="KW-1185">Reference proteome</keyword>
<keyword id="KW-0732">Signal</keyword>